<proteinExistence type="predicted"/>
<dbReference type="EMBL" id="AJ854042">
    <property type="protein sequence ID" value="CAH69394.1"/>
    <property type="molecule type" value="Genomic_DNA"/>
</dbReference>
<dbReference type="RefSeq" id="YP_001496932.1">
    <property type="nucleotide sequence ID" value="NC_009884.1"/>
</dbReference>
<dbReference type="KEGG" id="vg:5656097"/>
<dbReference type="Proteomes" id="UP000006364">
    <property type="component" value="Genome"/>
</dbReference>
<name>Y085_AFV2P</name>
<reference key="1">
    <citation type="journal article" date="2005" name="J. Bacteriol.">
        <title>Structure and genome organization of AFV2, a novel archaeal lipothrixvirus with unusual terminal and core structures.</title>
        <authorList>
            <person name="Haring M."/>
            <person name="Vestergaard G."/>
            <person name="Brugger K."/>
            <person name="Rachel R."/>
            <person name="Garrett R.A."/>
            <person name="Prangishvili D."/>
        </authorList>
    </citation>
    <scope>NUCLEOTIDE SEQUENCE [GENOMIC DNA]</scope>
</reference>
<organism>
    <name type="scientific">Acidianus filamentous virus 2 (isolate Italy/Pozzuoli)</name>
    <name type="common">AFV-2</name>
    <dbReference type="NCBI Taxonomy" id="654910"/>
    <lineage>
        <taxon>Viruses</taxon>
        <taxon>Adnaviria</taxon>
        <taxon>Zilligvirae</taxon>
        <taxon>Taleaviricota</taxon>
        <taxon>Tokiviricetes</taxon>
        <taxon>Ligamenvirales</taxon>
        <taxon>Lipothrixviridae</taxon>
        <taxon>Deltalipothrixvirus</taxon>
        <taxon>Acidianus filamentous virus 2</taxon>
    </lineage>
</organism>
<sequence length="85" mass="10072">MSNYEILDKIRERIEKEFIMARQSRIDVVLMPMNEYSGYFYTIYTVEYTDVSNEFSSVMLTQGEYIILKNSVLVKIGDKVKQLEL</sequence>
<accession>Q573G2</accession>
<gene>
    <name type="ORF">ORF85</name>
</gene>
<organismHost>
    <name type="scientific">Acidianus sp. F28</name>
    <dbReference type="NCBI Taxonomy" id="315458"/>
</organismHost>
<protein>
    <recommendedName>
        <fullName>Uncharacterized protein ORF85</fullName>
    </recommendedName>
</protein>
<feature type="chain" id="PRO_0000384494" description="Uncharacterized protein ORF85">
    <location>
        <begin position="1"/>
        <end position="85"/>
    </location>
</feature>
<keyword id="KW-1185">Reference proteome</keyword>